<keyword id="KW-0027">Amidation</keyword>
<keyword id="KW-0903">Direct protein sequencing</keyword>
<keyword id="KW-0372">Hormone</keyword>
<keyword id="KW-0527">Neuropeptide</keyword>
<keyword id="KW-0964">Secreted</keyword>
<keyword id="KW-0765">Sulfation</keyword>
<evidence type="ECO:0000250" key="1">
    <source>
        <dbReference type="UniProtKB" id="P41493"/>
    </source>
</evidence>
<evidence type="ECO:0000255" key="2"/>
<evidence type="ECO:0000269" key="3">
    <source>
    </source>
</evidence>
<evidence type="ECO:0000303" key="4">
    <source>
    </source>
</evidence>
<evidence type="ECO:0000305" key="5"/>
<reference evidence="5" key="1">
    <citation type="journal article" date="2009" name="BMC Evol. Biol.">
        <title>A proteomic approach for studying insect phylogeny: CAPA peptides of ancient insect taxa (Dictyoptera, Blattoptera) as a test case.</title>
        <authorList>
            <person name="Roth S."/>
            <person name="Fromm B."/>
            <person name="Gaede G."/>
            <person name="Predel R."/>
        </authorList>
    </citation>
    <scope>PROTEIN SEQUENCE</scope>
    <scope>AMIDATION AT PHE-11</scope>
    <source>
        <tissue evidence="3">Corpora cardiaca</tissue>
    </source>
</reference>
<comment type="function">
    <text evidence="1">Myotropic peptide.</text>
</comment>
<comment type="subcellular location">
    <subcellularLocation>
        <location evidence="5">Secreted</location>
    </subcellularLocation>
</comment>
<comment type="similarity">
    <text evidence="2">Belongs to the gastrin/cholecystokinin family.</text>
</comment>
<feature type="peptide" id="PRO_0000378878" description="Sulfakinin-1" evidence="3">
    <location>
        <begin position="1"/>
        <end position="11"/>
    </location>
</feature>
<feature type="modified residue" description="Sulfotyrosine" evidence="1">
    <location>
        <position position="6"/>
    </location>
</feature>
<feature type="modified residue" description="Phenylalanine amide" evidence="3">
    <location>
        <position position="11"/>
    </location>
</feature>
<accession>P85640</accession>
<sequence length="11" mass="1459">EQFEDYGHMRF</sequence>
<name>SK1_GROGR</name>
<protein>
    <recommendedName>
        <fullName evidence="4">Sulfakinin-1</fullName>
        <shortName evidence="4">GroGr-SK-1</shortName>
    </recommendedName>
</protein>
<dbReference type="GO" id="GO:0005576">
    <property type="term" value="C:extracellular region"/>
    <property type="evidence" value="ECO:0007669"/>
    <property type="project" value="UniProtKB-SubCell"/>
</dbReference>
<dbReference type="GO" id="GO:0005179">
    <property type="term" value="F:hormone activity"/>
    <property type="evidence" value="ECO:0007669"/>
    <property type="project" value="UniProtKB-KW"/>
</dbReference>
<dbReference type="GO" id="GO:0007218">
    <property type="term" value="P:neuropeptide signaling pathway"/>
    <property type="evidence" value="ECO:0007669"/>
    <property type="project" value="UniProtKB-KW"/>
</dbReference>
<dbReference type="InterPro" id="IPR013152">
    <property type="entry name" value="Gastrin/cholecystokinin_CS"/>
</dbReference>
<dbReference type="InterPro" id="IPR013259">
    <property type="entry name" value="Sulfakinin"/>
</dbReference>
<dbReference type="Pfam" id="PF08257">
    <property type="entry name" value="Sulfakinin"/>
    <property type="match status" value="1"/>
</dbReference>
<dbReference type="PROSITE" id="PS00259">
    <property type="entry name" value="GASTRIN"/>
    <property type="match status" value="1"/>
</dbReference>
<proteinExistence type="evidence at protein level"/>
<organism>
    <name type="scientific">Gromphadorhina grandidieri</name>
    <name type="common">Cockroach</name>
    <dbReference type="NCBI Taxonomy" id="521511"/>
    <lineage>
        <taxon>Eukaryota</taxon>
        <taxon>Metazoa</taxon>
        <taxon>Ecdysozoa</taxon>
        <taxon>Arthropoda</taxon>
        <taxon>Hexapoda</taxon>
        <taxon>Insecta</taxon>
        <taxon>Pterygota</taxon>
        <taxon>Neoptera</taxon>
        <taxon>Polyneoptera</taxon>
        <taxon>Dictyoptera</taxon>
        <taxon>Blattodea</taxon>
        <taxon>Blaberoidea</taxon>
        <taxon>Blaberidae</taxon>
        <taxon>Oxyhaloinae</taxon>
        <taxon>Gromphadorhina</taxon>
    </lineage>
</organism>